<sequence length="137" mass="15712">MSENQDTQKSFLETVKFDDRGLVPAIVQDHETGKVLMMAWMNLESLKMTLEKKKACYWSRSRNKLWLKGESSGNMQDVHDIMIDCDGDTLLLKVSQKGGACHVGYHSCFYRKTTDGEQMEICDTLMFDPEEVYGKKS</sequence>
<gene>
    <name evidence="1" type="primary">hisI</name>
    <name type="ordered locus">Cpar_0458</name>
</gene>
<organism>
    <name type="scientific">Chlorobaculum parvum (strain DSM 263 / NCIMB 8327)</name>
    <name type="common">Chlorobium vibrioforme subsp. thiosulfatophilum</name>
    <dbReference type="NCBI Taxonomy" id="517417"/>
    <lineage>
        <taxon>Bacteria</taxon>
        <taxon>Pseudomonadati</taxon>
        <taxon>Chlorobiota</taxon>
        <taxon>Chlorobiia</taxon>
        <taxon>Chlorobiales</taxon>
        <taxon>Chlorobiaceae</taxon>
        <taxon>Chlorobaculum</taxon>
    </lineage>
</organism>
<reference key="1">
    <citation type="submission" date="2008-06" db="EMBL/GenBank/DDBJ databases">
        <title>Complete sequence of Chlorobaculum parvum NCIB 8327.</title>
        <authorList>
            <consortium name="US DOE Joint Genome Institute"/>
            <person name="Lucas S."/>
            <person name="Copeland A."/>
            <person name="Lapidus A."/>
            <person name="Glavina del Rio T."/>
            <person name="Dalin E."/>
            <person name="Tice H."/>
            <person name="Bruce D."/>
            <person name="Goodwin L."/>
            <person name="Pitluck S."/>
            <person name="Schmutz J."/>
            <person name="Larimer F."/>
            <person name="Land M."/>
            <person name="Hauser L."/>
            <person name="Kyrpides N."/>
            <person name="Mikhailova N."/>
            <person name="Zhao F."/>
            <person name="Li T."/>
            <person name="Liu Z."/>
            <person name="Overmann J."/>
            <person name="Bryant D.A."/>
            <person name="Richardson P."/>
        </authorList>
    </citation>
    <scope>NUCLEOTIDE SEQUENCE [LARGE SCALE GENOMIC DNA]</scope>
    <source>
        <strain>DSM 263 / NCIMB 8327</strain>
    </source>
</reference>
<accession>B3QLJ0</accession>
<name>HIS3_CHLP8</name>
<evidence type="ECO:0000255" key="1">
    <source>
        <dbReference type="HAMAP-Rule" id="MF_01021"/>
    </source>
</evidence>
<dbReference type="EC" id="3.5.4.19" evidence="1"/>
<dbReference type="EMBL" id="CP001099">
    <property type="protein sequence ID" value="ACF10880.1"/>
    <property type="molecule type" value="Genomic_DNA"/>
</dbReference>
<dbReference type="RefSeq" id="WP_012501713.1">
    <property type="nucleotide sequence ID" value="NC_011027.1"/>
</dbReference>
<dbReference type="SMR" id="B3QLJ0"/>
<dbReference type="STRING" id="517417.Cpar_0458"/>
<dbReference type="KEGG" id="cpc:Cpar_0458"/>
<dbReference type="eggNOG" id="COG0139">
    <property type="taxonomic scope" value="Bacteria"/>
</dbReference>
<dbReference type="HOGENOM" id="CLU_048577_5_0_10"/>
<dbReference type="OrthoDB" id="9795769at2"/>
<dbReference type="UniPathway" id="UPA00031">
    <property type="reaction ID" value="UER00008"/>
</dbReference>
<dbReference type="Proteomes" id="UP000008811">
    <property type="component" value="Chromosome"/>
</dbReference>
<dbReference type="GO" id="GO:0005737">
    <property type="term" value="C:cytoplasm"/>
    <property type="evidence" value="ECO:0007669"/>
    <property type="project" value="UniProtKB-SubCell"/>
</dbReference>
<dbReference type="GO" id="GO:0000287">
    <property type="term" value="F:magnesium ion binding"/>
    <property type="evidence" value="ECO:0007669"/>
    <property type="project" value="UniProtKB-UniRule"/>
</dbReference>
<dbReference type="GO" id="GO:0004635">
    <property type="term" value="F:phosphoribosyl-AMP cyclohydrolase activity"/>
    <property type="evidence" value="ECO:0007669"/>
    <property type="project" value="UniProtKB-UniRule"/>
</dbReference>
<dbReference type="GO" id="GO:0008270">
    <property type="term" value="F:zinc ion binding"/>
    <property type="evidence" value="ECO:0007669"/>
    <property type="project" value="UniProtKB-UniRule"/>
</dbReference>
<dbReference type="GO" id="GO:0000105">
    <property type="term" value="P:L-histidine biosynthetic process"/>
    <property type="evidence" value="ECO:0007669"/>
    <property type="project" value="UniProtKB-UniRule"/>
</dbReference>
<dbReference type="FunFam" id="3.10.20.810:FF:000001">
    <property type="entry name" value="Histidine biosynthesis bifunctional protein HisIE"/>
    <property type="match status" value="1"/>
</dbReference>
<dbReference type="Gene3D" id="3.10.20.810">
    <property type="entry name" value="Phosphoribosyl-AMP cyclohydrolase"/>
    <property type="match status" value="1"/>
</dbReference>
<dbReference type="HAMAP" id="MF_01021">
    <property type="entry name" value="HisI"/>
    <property type="match status" value="1"/>
</dbReference>
<dbReference type="InterPro" id="IPR026660">
    <property type="entry name" value="PRA-CH"/>
</dbReference>
<dbReference type="InterPro" id="IPR002496">
    <property type="entry name" value="PRib_AMP_CycHydrolase_dom"/>
</dbReference>
<dbReference type="InterPro" id="IPR038019">
    <property type="entry name" value="PRib_AMP_CycHydrolase_sf"/>
</dbReference>
<dbReference type="NCBIfam" id="NF000768">
    <property type="entry name" value="PRK00051.1"/>
    <property type="match status" value="1"/>
</dbReference>
<dbReference type="PANTHER" id="PTHR42945">
    <property type="entry name" value="HISTIDINE BIOSYNTHESIS BIFUNCTIONAL PROTEIN"/>
    <property type="match status" value="1"/>
</dbReference>
<dbReference type="PANTHER" id="PTHR42945:SF1">
    <property type="entry name" value="HISTIDINE BIOSYNTHESIS BIFUNCTIONAL PROTEIN HIS7"/>
    <property type="match status" value="1"/>
</dbReference>
<dbReference type="Pfam" id="PF01502">
    <property type="entry name" value="PRA-CH"/>
    <property type="match status" value="1"/>
</dbReference>
<dbReference type="SUPFAM" id="SSF141734">
    <property type="entry name" value="HisI-like"/>
    <property type="match status" value="1"/>
</dbReference>
<proteinExistence type="inferred from homology"/>
<keyword id="KW-0028">Amino-acid biosynthesis</keyword>
<keyword id="KW-0963">Cytoplasm</keyword>
<keyword id="KW-0368">Histidine biosynthesis</keyword>
<keyword id="KW-0378">Hydrolase</keyword>
<keyword id="KW-0460">Magnesium</keyword>
<keyword id="KW-0479">Metal-binding</keyword>
<keyword id="KW-0862">Zinc</keyword>
<protein>
    <recommendedName>
        <fullName evidence="1">Phosphoribosyl-AMP cyclohydrolase</fullName>
        <shortName evidence="1">PRA-CH</shortName>
        <ecNumber evidence="1">3.5.4.19</ecNumber>
    </recommendedName>
</protein>
<comment type="function">
    <text evidence="1">Catalyzes the hydrolysis of the adenine ring of phosphoribosyl-AMP.</text>
</comment>
<comment type="catalytic activity">
    <reaction evidence="1">
        <text>1-(5-phospho-beta-D-ribosyl)-5'-AMP + H2O = 1-(5-phospho-beta-D-ribosyl)-5-[(5-phospho-beta-D-ribosylamino)methylideneamino]imidazole-4-carboxamide</text>
        <dbReference type="Rhea" id="RHEA:20049"/>
        <dbReference type="ChEBI" id="CHEBI:15377"/>
        <dbReference type="ChEBI" id="CHEBI:58435"/>
        <dbReference type="ChEBI" id="CHEBI:59457"/>
        <dbReference type="EC" id="3.5.4.19"/>
    </reaction>
</comment>
<comment type="cofactor">
    <cofactor evidence="1">
        <name>Mg(2+)</name>
        <dbReference type="ChEBI" id="CHEBI:18420"/>
    </cofactor>
    <text evidence="1">Binds 1 Mg(2+) ion per subunit.</text>
</comment>
<comment type="cofactor">
    <cofactor evidence="1">
        <name>Zn(2+)</name>
        <dbReference type="ChEBI" id="CHEBI:29105"/>
    </cofactor>
    <text evidence="1">Binds 1 zinc ion per subunit.</text>
</comment>
<comment type="pathway">
    <text evidence="1">Amino-acid biosynthesis; L-histidine biosynthesis; L-histidine from 5-phospho-alpha-D-ribose 1-diphosphate: step 3/9.</text>
</comment>
<comment type="subunit">
    <text evidence="1">Homodimer.</text>
</comment>
<comment type="subcellular location">
    <subcellularLocation>
        <location evidence="1">Cytoplasm</location>
    </subcellularLocation>
</comment>
<comment type="similarity">
    <text evidence="1">Belongs to the PRA-CH family.</text>
</comment>
<feature type="chain" id="PRO_1000135342" description="Phosphoribosyl-AMP cyclohydrolase">
    <location>
        <begin position="1"/>
        <end position="137"/>
    </location>
</feature>
<feature type="binding site" evidence="1">
    <location>
        <position position="84"/>
    </location>
    <ligand>
        <name>Mg(2+)</name>
        <dbReference type="ChEBI" id="CHEBI:18420"/>
    </ligand>
</feature>
<feature type="binding site" evidence="1">
    <location>
        <position position="85"/>
    </location>
    <ligand>
        <name>Zn(2+)</name>
        <dbReference type="ChEBI" id="CHEBI:29105"/>
        <note>ligand shared between dimeric partners</note>
    </ligand>
</feature>
<feature type="binding site" evidence="1">
    <location>
        <position position="86"/>
    </location>
    <ligand>
        <name>Mg(2+)</name>
        <dbReference type="ChEBI" id="CHEBI:18420"/>
    </ligand>
</feature>
<feature type="binding site" evidence="1">
    <location>
        <position position="88"/>
    </location>
    <ligand>
        <name>Mg(2+)</name>
        <dbReference type="ChEBI" id="CHEBI:18420"/>
    </ligand>
</feature>
<feature type="binding site" evidence="1">
    <location>
        <position position="101"/>
    </location>
    <ligand>
        <name>Zn(2+)</name>
        <dbReference type="ChEBI" id="CHEBI:29105"/>
        <note>ligand shared between dimeric partners</note>
    </ligand>
</feature>
<feature type="binding site" evidence="1">
    <location>
        <position position="108"/>
    </location>
    <ligand>
        <name>Zn(2+)</name>
        <dbReference type="ChEBI" id="CHEBI:29105"/>
        <note>ligand shared between dimeric partners</note>
    </ligand>
</feature>